<dbReference type="EMBL" id="CP000548">
    <property type="protein sequence ID" value="ABO04898.1"/>
    <property type="molecule type" value="Genomic_DNA"/>
</dbReference>
<dbReference type="RefSeq" id="WP_004194131.1">
    <property type="nucleotide sequence ID" value="NZ_CP007802.1"/>
</dbReference>
<dbReference type="SMR" id="A3MN51"/>
<dbReference type="GeneID" id="93059411"/>
<dbReference type="KEGG" id="bmaz:BM44_1083"/>
<dbReference type="KEGG" id="bmn:BMA10247_2157"/>
<dbReference type="PATRIC" id="fig|320389.8.peg.1208"/>
<dbReference type="GO" id="GO:0030163">
    <property type="term" value="P:protein catabolic process"/>
    <property type="evidence" value="ECO:0007669"/>
    <property type="project" value="InterPro"/>
</dbReference>
<dbReference type="GO" id="GO:0006508">
    <property type="term" value="P:proteolysis"/>
    <property type="evidence" value="ECO:0007669"/>
    <property type="project" value="UniProtKB-UniRule"/>
</dbReference>
<dbReference type="FunFam" id="3.30.1390.10:FF:000002">
    <property type="entry name" value="ATP-dependent Clp protease adapter protein ClpS"/>
    <property type="match status" value="1"/>
</dbReference>
<dbReference type="Gene3D" id="3.30.1390.10">
    <property type="match status" value="1"/>
</dbReference>
<dbReference type="HAMAP" id="MF_00302">
    <property type="entry name" value="ClpS"/>
    <property type="match status" value="1"/>
</dbReference>
<dbReference type="InterPro" id="IPR022935">
    <property type="entry name" value="ClpS"/>
</dbReference>
<dbReference type="InterPro" id="IPR003769">
    <property type="entry name" value="ClpS_core"/>
</dbReference>
<dbReference type="InterPro" id="IPR014719">
    <property type="entry name" value="Ribosomal_bL12_C/ClpS-like"/>
</dbReference>
<dbReference type="NCBIfam" id="NF000672">
    <property type="entry name" value="PRK00033.1-5"/>
    <property type="match status" value="1"/>
</dbReference>
<dbReference type="PANTHER" id="PTHR33473:SF19">
    <property type="entry name" value="ATP-DEPENDENT CLP PROTEASE ADAPTER PROTEIN CLPS"/>
    <property type="match status" value="1"/>
</dbReference>
<dbReference type="PANTHER" id="PTHR33473">
    <property type="entry name" value="ATP-DEPENDENT CLP PROTEASE ADAPTER PROTEIN CLPS1, CHLOROPLASTIC"/>
    <property type="match status" value="1"/>
</dbReference>
<dbReference type="Pfam" id="PF02617">
    <property type="entry name" value="ClpS"/>
    <property type="match status" value="1"/>
</dbReference>
<dbReference type="SUPFAM" id="SSF54736">
    <property type="entry name" value="ClpS-like"/>
    <property type="match status" value="1"/>
</dbReference>
<organism>
    <name type="scientific">Burkholderia mallei (strain NCTC 10247)</name>
    <dbReference type="NCBI Taxonomy" id="320389"/>
    <lineage>
        <taxon>Bacteria</taxon>
        <taxon>Pseudomonadati</taxon>
        <taxon>Pseudomonadota</taxon>
        <taxon>Betaproteobacteria</taxon>
        <taxon>Burkholderiales</taxon>
        <taxon>Burkholderiaceae</taxon>
        <taxon>Burkholderia</taxon>
        <taxon>pseudomallei group</taxon>
    </lineage>
</organism>
<proteinExistence type="inferred from homology"/>
<name>CLPS_BURM7</name>
<sequence length="104" mass="11923">MAIIPDKQDSSVLERKEQKLKPPSMYKVVLLNDDFTPMEFVVMVVQEYFKKDRETATQIMLKVHREGRGVCGVYTRDIASTKVEQVVTHARQAGHPLQCVMEEA</sequence>
<reference key="1">
    <citation type="journal article" date="2010" name="Genome Biol. Evol.">
        <title>Continuing evolution of Burkholderia mallei through genome reduction and large-scale rearrangements.</title>
        <authorList>
            <person name="Losada L."/>
            <person name="Ronning C.M."/>
            <person name="DeShazer D."/>
            <person name="Woods D."/>
            <person name="Fedorova N."/>
            <person name="Kim H.S."/>
            <person name="Shabalina S.A."/>
            <person name="Pearson T.R."/>
            <person name="Brinkac L."/>
            <person name="Tan P."/>
            <person name="Nandi T."/>
            <person name="Crabtree J."/>
            <person name="Badger J."/>
            <person name="Beckstrom-Sternberg S."/>
            <person name="Saqib M."/>
            <person name="Schutzer S.E."/>
            <person name="Keim P."/>
            <person name="Nierman W.C."/>
        </authorList>
    </citation>
    <scope>NUCLEOTIDE SEQUENCE [LARGE SCALE GENOMIC DNA]</scope>
    <source>
        <strain>NCTC 10247</strain>
    </source>
</reference>
<gene>
    <name evidence="1" type="primary">clpS</name>
    <name type="ordered locus">BMA10247_2157</name>
</gene>
<feature type="chain" id="PRO_1000022595" description="ATP-dependent Clp protease adapter protein ClpS">
    <location>
        <begin position="1"/>
        <end position="104"/>
    </location>
</feature>
<protein>
    <recommendedName>
        <fullName evidence="1">ATP-dependent Clp protease adapter protein ClpS</fullName>
    </recommendedName>
</protein>
<evidence type="ECO:0000255" key="1">
    <source>
        <dbReference type="HAMAP-Rule" id="MF_00302"/>
    </source>
</evidence>
<comment type="function">
    <text evidence="1">Involved in the modulation of the specificity of the ClpAP-mediated ATP-dependent protein degradation.</text>
</comment>
<comment type="subunit">
    <text evidence="1">Binds to the N-terminal domain of the chaperone ClpA.</text>
</comment>
<comment type="similarity">
    <text evidence="1">Belongs to the ClpS family.</text>
</comment>
<accession>A3MN51</accession>